<protein>
    <recommendedName>
        <fullName evidence="1">Methylthioribulose-1-phosphate dehydratase</fullName>
        <shortName evidence="1">MTRu-1-P dehydratase</shortName>
        <ecNumber evidence="1">4.2.1.109</ecNumber>
    </recommendedName>
    <alternativeName>
        <fullName evidence="1">APAF1-interacting protein homolog</fullName>
    </alternativeName>
</protein>
<organism>
    <name type="scientific">Salmo salar</name>
    <name type="common">Atlantic salmon</name>
    <dbReference type="NCBI Taxonomy" id="8030"/>
    <lineage>
        <taxon>Eukaryota</taxon>
        <taxon>Metazoa</taxon>
        <taxon>Chordata</taxon>
        <taxon>Craniata</taxon>
        <taxon>Vertebrata</taxon>
        <taxon>Euteleostomi</taxon>
        <taxon>Actinopterygii</taxon>
        <taxon>Neopterygii</taxon>
        <taxon>Teleostei</taxon>
        <taxon>Protacanthopterygii</taxon>
        <taxon>Salmoniformes</taxon>
        <taxon>Salmonidae</taxon>
        <taxon>Salmoninae</taxon>
        <taxon>Salmo</taxon>
    </lineage>
</organism>
<proteinExistence type="evidence at transcript level"/>
<feature type="chain" id="PRO_0000393775" description="Methylthioribulose-1-phosphate dehydratase">
    <location>
        <begin position="1"/>
        <end position="251"/>
    </location>
</feature>
<feature type="region of interest" description="Disordered" evidence="2">
    <location>
        <begin position="1"/>
        <end position="26"/>
    </location>
</feature>
<feature type="region of interest" description="Disordered" evidence="2">
    <location>
        <begin position="232"/>
        <end position="251"/>
    </location>
</feature>
<feature type="compositionally biased region" description="Basic and acidic residues" evidence="2">
    <location>
        <begin position="9"/>
        <end position="26"/>
    </location>
</feature>
<feature type="active site" description="Proton donor/acceptor" evidence="1">
    <location>
        <position position="142"/>
    </location>
</feature>
<feature type="binding site" evidence="1">
    <location>
        <position position="100"/>
    </location>
    <ligand>
        <name>substrate</name>
    </ligand>
</feature>
<feature type="binding site" evidence="1">
    <location>
        <position position="118"/>
    </location>
    <ligand>
        <name>Zn(2+)</name>
        <dbReference type="ChEBI" id="CHEBI:29105"/>
    </ligand>
</feature>
<feature type="binding site" evidence="1">
    <location>
        <position position="120"/>
    </location>
    <ligand>
        <name>Zn(2+)</name>
        <dbReference type="ChEBI" id="CHEBI:29105"/>
    </ligand>
</feature>
<feature type="binding site" evidence="1">
    <location>
        <position position="198"/>
    </location>
    <ligand>
        <name>Zn(2+)</name>
        <dbReference type="ChEBI" id="CHEBI:29105"/>
    </ligand>
</feature>
<accession>B5X277</accession>
<dbReference type="EC" id="4.2.1.109" evidence="1"/>
<dbReference type="EMBL" id="BT045146">
    <property type="protein sequence ID" value="ACI33408.1"/>
    <property type="molecule type" value="mRNA"/>
</dbReference>
<dbReference type="EMBL" id="BT047341">
    <property type="protein sequence ID" value="ACI67142.1"/>
    <property type="molecule type" value="mRNA"/>
</dbReference>
<dbReference type="EMBL" id="BT058570">
    <property type="protein sequence ID" value="ACN10283.1"/>
    <property type="molecule type" value="mRNA"/>
</dbReference>
<dbReference type="EMBL" id="BT060281">
    <property type="protein sequence ID" value="ACN12641.1"/>
    <property type="molecule type" value="mRNA"/>
</dbReference>
<dbReference type="RefSeq" id="NP_001133525.1">
    <property type="nucleotide sequence ID" value="NM_001140053.1"/>
</dbReference>
<dbReference type="SMR" id="B5X277"/>
<dbReference type="STRING" id="8030.ENSSSAP00000035673"/>
<dbReference type="PaxDb" id="8030-ENSSSAP00000035673"/>
<dbReference type="Ensembl" id="ENSSSAT00070021606">
    <property type="protein sequence ID" value="ENSSSAP00070020600"/>
    <property type="gene ID" value="ENSSSAG00070013564"/>
</dbReference>
<dbReference type="GeneID" id="100195024"/>
<dbReference type="KEGG" id="sasa:100195024"/>
<dbReference type="CTD" id="51074"/>
<dbReference type="OrthoDB" id="319770at7898"/>
<dbReference type="UniPathway" id="UPA00904">
    <property type="reaction ID" value="UER00875"/>
</dbReference>
<dbReference type="Proteomes" id="UP000087266">
    <property type="component" value="Chromosome ssa26"/>
</dbReference>
<dbReference type="GO" id="GO:0005737">
    <property type="term" value="C:cytoplasm"/>
    <property type="evidence" value="ECO:0007669"/>
    <property type="project" value="UniProtKB-SubCell"/>
</dbReference>
<dbReference type="GO" id="GO:0046570">
    <property type="term" value="F:methylthioribulose 1-phosphate dehydratase activity"/>
    <property type="evidence" value="ECO:0000250"/>
    <property type="project" value="UniProtKB"/>
</dbReference>
<dbReference type="GO" id="GO:0008270">
    <property type="term" value="F:zinc ion binding"/>
    <property type="evidence" value="ECO:0000250"/>
    <property type="project" value="UniProtKB"/>
</dbReference>
<dbReference type="GO" id="GO:0006915">
    <property type="term" value="P:apoptotic process"/>
    <property type="evidence" value="ECO:0007669"/>
    <property type="project" value="UniProtKB-KW"/>
</dbReference>
<dbReference type="GO" id="GO:0019509">
    <property type="term" value="P:L-methionine salvage from methylthioadenosine"/>
    <property type="evidence" value="ECO:0000250"/>
    <property type="project" value="UniProtKB"/>
</dbReference>
<dbReference type="FunFam" id="3.40.225.10:FF:000003">
    <property type="entry name" value="Methylthioribulose-1-phosphate dehydratase"/>
    <property type="match status" value="1"/>
</dbReference>
<dbReference type="Gene3D" id="3.40.225.10">
    <property type="entry name" value="Class II aldolase/adducin N-terminal domain"/>
    <property type="match status" value="1"/>
</dbReference>
<dbReference type="HAMAP" id="MF_03116">
    <property type="entry name" value="Salvage_MtnB_euk"/>
    <property type="match status" value="1"/>
</dbReference>
<dbReference type="InterPro" id="IPR001303">
    <property type="entry name" value="Aldolase_II/adducin_N"/>
</dbReference>
<dbReference type="InterPro" id="IPR036409">
    <property type="entry name" value="Aldolase_II/adducin_N_sf"/>
</dbReference>
<dbReference type="InterPro" id="IPR017714">
    <property type="entry name" value="MethylthioRu-1-P_deHdtase_MtnB"/>
</dbReference>
<dbReference type="InterPro" id="IPR027514">
    <property type="entry name" value="Salvage_MtnB_euk"/>
</dbReference>
<dbReference type="NCBIfam" id="TIGR03328">
    <property type="entry name" value="salvage_mtnB"/>
    <property type="match status" value="1"/>
</dbReference>
<dbReference type="PANTHER" id="PTHR10640">
    <property type="entry name" value="METHYLTHIORIBULOSE-1-PHOSPHATE DEHYDRATASE"/>
    <property type="match status" value="1"/>
</dbReference>
<dbReference type="PANTHER" id="PTHR10640:SF7">
    <property type="entry name" value="METHYLTHIORIBULOSE-1-PHOSPHATE DEHYDRATASE"/>
    <property type="match status" value="1"/>
</dbReference>
<dbReference type="Pfam" id="PF00596">
    <property type="entry name" value="Aldolase_II"/>
    <property type="match status" value="1"/>
</dbReference>
<dbReference type="SMART" id="SM01007">
    <property type="entry name" value="Aldolase_II"/>
    <property type="match status" value="1"/>
</dbReference>
<dbReference type="SUPFAM" id="SSF53639">
    <property type="entry name" value="AraD/HMP-PK domain-like"/>
    <property type="match status" value="1"/>
</dbReference>
<evidence type="ECO:0000255" key="1">
    <source>
        <dbReference type="HAMAP-Rule" id="MF_03116"/>
    </source>
</evidence>
<evidence type="ECO:0000256" key="2">
    <source>
        <dbReference type="SAM" id="MobiDB-lite"/>
    </source>
</evidence>
<gene>
    <name evidence="1" type="primary">apip</name>
</gene>
<reference key="1">
    <citation type="journal article" date="2010" name="BMC Genomics">
        <title>Salmo salar and Esox lucius full-length cDNA sequences reveal changes in evolutionary pressures on a post-tetraploidization genome.</title>
        <authorList>
            <person name="Leong J.S."/>
            <person name="Jantzen S.G."/>
            <person name="von Schalburg K.R."/>
            <person name="Cooper G.A."/>
            <person name="Messmer A.M."/>
            <person name="Liao N.Y."/>
            <person name="Munro S."/>
            <person name="Moore R."/>
            <person name="Holt R.A."/>
            <person name="Jones S.J."/>
            <person name="Davidson W.S."/>
            <person name="Koop B.F."/>
        </authorList>
    </citation>
    <scope>NUCLEOTIDE SEQUENCE [LARGE SCALE MRNA]</scope>
    <source>
        <tissue>Brain</tissue>
        <tissue>Spleen</tissue>
    </source>
</reference>
<keyword id="KW-0028">Amino-acid biosynthesis</keyword>
<keyword id="KW-0053">Apoptosis</keyword>
<keyword id="KW-0963">Cytoplasm</keyword>
<keyword id="KW-0456">Lyase</keyword>
<keyword id="KW-0479">Metal-binding</keyword>
<keyword id="KW-0486">Methionine biosynthesis</keyword>
<keyword id="KW-1185">Reference proteome</keyword>
<keyword id="KW-0862">Zinc</keyword>
<comment type="function">
    <text evidence="1">Catalyzes the dehydration of methylthioribulose-1-phosphate (MTRu-1-P) into 2,3-diketo-5-methylthiopentyl-1-phosphate (DK-MTP-1-P). Functions in the methionine salvage pathway. May play a role in apoptosis.</text>
</comment>
<comment type="catalytic activity">
    <reaction evidence="1">
        <text>5-(methylsulfanyl)-D-ribulose 1-phosphate = 5-methylsulfanyl-2,3-dioxopentyl phosphate + H2O</text>
        <dbReference type="Rhea" id="RHEA:15549"/>
        <dbReference type="ChEBI" id="CHEBI:15377"/>
        <dbReference type="ChEBI" id="CHEBI:58548"/>
        <dbReference type="ChEBI" id="CHEBI:58828"/>
        <dbReference type="EC" id="4.2.1.109"/>
    </reaction>
</comment>
<comment type="cofactor">
    <cofactor evidence="1">
        <name>Zn(2+)</name>
        <dbReference type="ChEBI" id="CHEBI:29105"/>
    </cofactor>
    <text evidence="1">Binds 1 zinc ion per subunit.</text>
</comment>
<comment type="pathway">
    <text evidence="1">Amino-acid biosynthesis; L-methionine biosynthesis via salvage pathway; L-methionine from S-methyl-5-thio-alpha-D-ribose 1-phosphate: step 2/6.</text>
</comment>
<comment type="subcellular location">
    <subcellularLocation>
        <location evidence="1">Cytoplasm</location>
    </subcellularLocation>
</comment>
<comment type="similarity">
    <text evidence="1">Belongs to the aldolase class II family. MtnB subfamily.</text>
</comment>
<name>MTNB_SALSA</name>
<sequence>MTSVCDATNEDKENGSESTESQDKEHPRVLIPELCRLFYQLGWVTGTGGGLSLRRGDQIYIAPSGVQKERLQPDDMFVCDVEERDISSPPPWKKLKKSQCTPLFMNAFTMRAAQAVIHTHSKAAVMATLFYPGKEFRITHQEMIKGIRKGTSSTNYRYDETLVVPIIENTPEERDLKERMALAMEQYPDSCAVLVRRHGVYVWGESWEKAKTMCECYDYLFDIAVQMKQSGMDPSAPPIEENHYYDVQQSQ</sequence>